<gene>
    <name type="primary">pspC</name>
    <name type="ordered locus">SF1311</name>
    <name type="ordered locus">S1393</name>
</gene>
<sequence length="119" mass="13517">MAGINLNKKLWRIPQQGMVRGVCAGIANYFDVPVKLVRILVVLSIFFGLALFTLVAYIILSFALDPMPDNMAFGEQLPSSSELLDEVDRELAASETRLREMERYVTSDTFTLRSRFRQL</sequence>
<dbReference type="EMBL" id="AE005674">
    <property type="protein sequence ID" value="AAN42922.1"/>
    <property type="molecule type" value="Genomic_DNA"/>
</dbReference>
<dbReference type="EMBL" id="AE014073">
    <property type="protein sequence ID" value="AAP16804.1"/>
    <property type="molecule type" value="Genomic_DNA"/>
</dbReference>
<dbReference type="RefSeq" id="NP_707215.1">
    <property type="nucleotide sequence ID" value="NC_004337.2"/>
</dbReference>
<dbReference type="RefSeq" id="WP_000907387.1">
    <property type="nucleotide sequence ID" value="NZ_WPGW01000009.1"/>
</dbReference>
<dbReference type="SMR" id="P0AFN5"/>
<dbReference type="STRING" id="198214.SF1311"/>
<dbReference type="PaxDb" id="198214-SF1311"/>
<dbReference type="DNASU" id="1077771"/>
<dbReference type="GeneID" id="1024257"/>
<dbReference type="GeneID" id="93775432"/>
<dbReference type="KEGG" id="sfl:SF1311"/>
<dbReference type="KEGG" id="sfx:S1393"/>
<dbReference type="PATRIC" id="fig|198214.7.peg.1537"/>
<dbReference type="HOGENOM" id="CLU_137949_2_0_6"/>
<dbReference type="Proteomes" id="UP000001006">
    <property type="component" value="Chromosome"/>
</dbReference>
<dbReference type="Proteomes" id="UP000002673">
    <property type="component" value="Chromosome"/>
</dbReference>
<dbReference type="GO" id="GO:0005886">
    <property type="term" value="C:plasma membrane"/>
    <property type="evidence" value="ECO:0007669"/>
    <property type="project" value="UniProtKB-SubCell"/>
</dbReference>
<dbReference type="InterPro" id="IPR014320">
    <property type="entry name" value="Phageshock_PspC"/>
</dbReference>
<dbReference type="InterPro" id="IPR007168">
    <property type="entry name" value="Phageshock_PspC_N"/>
</dbReference>
<dbReference type="InterPro" id="IPR052027">
    <property type="entry name" value="PspC"/>
</dbReference>
<dbReference type="NCBIfam" id="TIGR02978">
    <property type="entry name" value="phageshock_pspC"/>
    <property type="match status" value="1"/>
</dbReference>
<dbReference type="NCBIfam" id="NF007973">
    <property type="entry name" value="PRK10697.1"/>
    <property type="match status" value="1"/>
</dbReference>
<dbReference type="PANTHER" id="PTHR33885">
    <property type="entry name" value="PHAGE SHOCK PROTEIN C"/>
    <property type="match status" value="1"/>
</dbReference>
<dbReference type="PANTHER" id="PTHR33885:SF3">
    <property type="entry name" value="PHAGE SHOCK PROTEIN C"/>
    <property type="match status" value="1"/>
</dbReference>
<dbReference type="Pfam" id="PF04024">
    <property type="entry name" value="PspC"/>
    <property type="match status" value="1"/>
</dbReference>
<feature type="chain" id="PRO_0000097077" description="Phage shock protein C">
    <location>
        <begin position="1"/>
        <end position="119"/>
    </location>
</feature>
<feature type="transmembrane region" description="Helical" evidence="2">
    <location>
        <begin position="39"/>
        <end position="59"/>
    </location>
</feature>
<proteinExistence type="inferred from homology"/>
<comment type="function">
    <text evidence="1">The phage shock protein (psp) operon (pspABCDE) may play a significant role in the competition for survival under nutrient- or energy-limited conditions. PspC is involved in transcription regulation (By similarity).</text>
</comment>
<comment type="subcellular location">
    <subcellularLocation>
        <location evidence="3">Cell inner membrane</location>
        <topology evidence="3">Single-pass membrane protein</topology>
    </subcellularLocation>
</comment>
<comment type="similarity">
    <text evidence="3">Belongs to the phageshock PspC family.</text>
</comment>
<accession>P0AFN5</accession>
<accession>P23855</accession>
<keyword id="KW-0010">Activator</keyword>
<keyword id="KW-0997">Cell inner membrane</keyword>
<keyword id="KW-1003">Cell membrane</keyword>
<keyword id="KW-0472">Membrane</keyword>
<keyword id="KW-1185">Reference proteome</keyword>
<keyword id="KW-0804">Transcription</keyword>
<keyword id="KW-0805">Transcription regulation</keyword>
<keyword id="KW-0812">Transmembrane</keyword>
<keyword id="KW-1133">Transmembrane helix</keyword>
<name>PSPC_SHIFL</name>
<organism>
    <name type="scientific">Shigella flexneri</name>
    <dbReference type="NCBI Taxonomy" id="623"/>
    <lineage>
        <taxon>Bacteria</taxon>
        <taxon>Pseudomonadati</taxon>
        <taxon>Pseudomonadota</taxon>
        <taxon>Gammaproteobacteria</taxon>
        <taxon>Enterobacterales</taxon>
        <taxon>Enterobacteriaceae</taxon>
        <taxon>Shigella</taxon>
    </lineage>
</organism>
<reference key="1">
    <citation type="journal article" date="2002" name="Nucleic Acids Res.">
        <title>Genome sequence of Shigella flexneri 2a: insights into pathogenicity through comparison with genomes of Escherichia coli K12 and O157.</title>
        <authorList>
            <person name="Jin Q."/>
            <person name="Yuan Z."/>
            <person name="Xu J."/>
            <person name="Wang Y."/>
            <person name="Shen Y."/>
            <person name="Lu W."/>
            <person name="Wang J."/>
            <person name="Liu H."/>
            <person name="Yang J."/>
            <person name="Yang F."/>
            <person name="Zhang X."/>
            <person name="Zhang J."/>
            <person name="Yang G."/>
            <person name="Wu H."/>
            <person name="Qu D."/>
            <person name="Dong J."/>
            <person name="Sun L."/>
            <person name="Xue Y."/>
            <person name="Zhao A."/>
            <person name="Gao Y."/>
            <person name="Zhu J."/>
            <person name="Kan B."/>
            <person name="Ding K."/>
            <person name="Chen S."/>
            <person name="Cheng H."/>
            <person name="Yao Z."/>
            <person name="He B."/>
            <person name="Chen R."/>
            <person name="Ma D."/>
            <person name="Qiang B."/>
            <person name="Wen Y."/>
            <person name="Hou Y."/>
            <person name="Yu J."/>
        </authorList>
    </citation>
    <scope>NUCLEOTIDE SEQUENCE [LARGE SCALE GENOMIC DNA]</scope>
    <source>
        <strain>301 / Serotype 2a</strain>
    </source>
</reference>
<reference key="2">
    <citation type="journal article" date="2003" name="Infect. Immun.">
        <title>Complete genome sequence and comparative genomics of Shigella flexneri serotype 2a strain 2457T.</title>
        <authorList>
            <person name="Wei J."/>
            <person name="Goldberg M.B."/>
            <person name="Burland V."/>
            <person name="Venkatesan M.M."/>
            <person name="Deng W."/>
            <person name="Fournier G."/>
            <person name="Mayhew G.F."/>
            <person name="Plunkett G. III"/>
            <person name="Rose D.J."/>
            <person name="Darling A."/>
            <person name="Mau B."/>
            <person name="Perna N.T."/>
            <person name="Payne S.M."/>
            <person name="Runyen-Janecky L.J."/>
            <person name="Zhou S."/>
            <person name="Schwartz D.C."/>
            <person name="Blattner F.R."/>
        </authorList>
    </citation>
    <scope>NUCLEOTIDE SEQUENCE [LARGE SCALE GENOMIC DNA]</scope>
    <source>
        <strain>ATCC 700930 / 2457T / Serotype 2a</strain>
    </source>
</reference>
<protein>
    <recommendedName>
        <fullName>Phage shock protein C</fullName>
    </recommendedName>
</protein>
<evidence type="ECO:0000250" key="1"/>
<evidence type="ECO:0000255" key="2"/>
<evidence type="ECO:0000305" key="3"/>